<organism>
    <name type="scientific">Danio rerio</name>
    <name type="common">Zebrafish</name>
    <name type="synonym">Brachydanio rerio</name>
    <dbReference type="NCBI Taxonomy" id="7955"/>
    <lineage>
        <taxon>Eukaryota</taxon>
        <taxon>Metazoa</taxon>
        <taxon>Chordata</taxon>
        <taxon>Craniata</taxon>
        <taxon>Vertebrata</taxon>
        <taxon>Euteleostomi</taxon>
        <taxon>Actinopterygii</taxon>
        <taxon>Neopterygii</taxon>
        <taxon>Teleostei</taxon>
        <taxon>Ostariophysi</taxon>
        <taxon>Cypriniformes</taxon>
        <taxon>Danionidae</taxon>
        <taxon>Danioninae</taxon>
        <taxon>Danio</taxon>
    </lineage>
</organism>
<protein>
    <recommendedName>
        <fullName evidence="6">Coiled-coil domain-containing protein 39</fullName>
    </recommendedName>
</protein>
<sequence>MSSALLEEVGWDADFAIPVANAENKALEEQIRKKQKDILNLDNKLNKHKDVINALTEHLKNLKQEVSHNQALCKAKEKETESEVHLKALAERETGRLKQEITRLESQLTTLNEKKNAQENSIFKATQKIDELTSQLNWDQQTLEAFLQESAHKDEDTMAIIKYAKQDERKIKELTLNIEKLTLESNQKRKTLDNELTETVTSQIALDKTAESFRQAHTERQELISQWENTIEQMRKRDQDIQQCAMMLAELNQTIREKNDLIKERKDFLEREIENNKELERNIGTVERQAFRLRQQLQEEEKNQRRLQDEVEVLKGTVDRTATDVETSRSQLSSMKKDIQDKTTKVEEAQLHNAALEEKLRMVTEAVLNGEEQAAQMEQLLREQEQNIKEIDSQLLRQKELLFKKSQEVQALRDKEKNVTAEICATRTALSNLDSKLRKLDQNFLQQQMIISNQDFQIQMLERKTLHLQGKVNTEEKKALEKKVADLAASLEEKKKTAANLNKQLKKLQDDIRCIKKDTEKIGAEKTNLSTKIQEVELFIETSEKERKKSRLKKQDSMVEKGLLKMEVQRLRNLLYDRADGVLTLEKRRLQLQTAMKEREEEIRVHREMLNKQVKLTEQERQGLSAAVNEAMSKIDKQRKRYEVLSVSLAPPEGEEDKSQAYFIIKAAQEKEELQRKGDELDAKIRKTEKEIHALENTLQVVNNCNSTHRKALTKVTESSPAHQEKLKLEEQRRAAEEKYKYKRRQTQELQEDIESMSNTLEGLLQEEKVLNEGIERTQAHVLSLNKDILSQEEKINRAVKQCAKYTKEIRSGKQSTEKTFEERDIELRELRDFNKSINKMLLDAMEGNPELSSILQIHFTQAGLSLPSPSSTPSSRLSSKPSSARSSASLHRSSNLSASSSPRSQSVSSPQMKTVDLGLGLSVTSPRGSQPSSAGSSRSSSKCKSP</sequence>
<evidence type="ECO:0000250" key="1">
    <source>
        <dbReference type="UniProtKB" id="A8IQT2"/>
    </source>
</evidence>
<evidence type="ECO:0000250" key="2">
    <source>
        <dbReference type="UniProtKB" id="Q9UFE4"/>
    </source>
</evidence>
<evidence type="ECO:0000255" key="3"/>
<evidence type="ECO:0000256" key="4">
    <source>
        <dbReference type="SAM" id="MobiDB-lite"/>
    </source>
</evidence>
<evidence type="ECO:0000269" key="5">
    <source>
    </source>
</evidence>
<evidence type="ECO:0000305" key="6"/>
<accession>P0CK98</accession>
<accession>E7F0V3</accession>
<feature type="chain" id="PRO_0000405818" description="Coiled-coil domain-containing protein 39">
    <location>
        <begin position="1"/>
        <end position="947"/>
    </location>
</feature>
<feature type="region of interest" description="Disordered" evidence="4">
    <location>
        <begin position="866"/>
        <end position="947"/>
    </location>
</feature>
<feature type="coiled-coil region" evidence="3">
    <location>
        <begin position="16"/>
        <end position="194"/>
    </location>
</feature>
<feature type="coiled-coil region" evidence="3">
    <location>
        <begin position="221"/>
        <end position="402"/>
    </location>
</feature>
<feature type="coiled-coil region" evidence="3">
    <location>
        <begin position="471"/>
        <end position="522"/>
    </location>
</feature>
<feature type="coiled-coil region" evidence="3">
    <location>
        <begin position="582"/>
        <end position="813"/>
    </location>
</feature>
<feature type="compositionally biased region" description="Low complexity" evidence="4">
    <location>
        <begin position="866"/>
        <end position="911"/>
    </location>
</feature>
<feature type="compositionally biased region" description="Low complexity" evidence="4">
    <location>
        <begin position="926"/>
        <end position="947"/>
    </location>
</feature>
<gene>
    <name type="primary">ccdc39</name>
</gene>
<comment type="function">
    <text evidence="1 2">Required for assembly of dynein regulatory complex (DRC) and inner dynein arm (IDA) complexes, which are responsible for ciliary beat regulation, thereby playing a central role in motility in cilia and flagella. Probably acts together with ccdc40 to form a molecular ruler that determines the 96 nanometer (nm) repeat length and arrangements of components in cilia and flagella. Not required for outer dynein arm complexes assembly.</text>
</comment>
<comment type="subcellular location">
    <subcellularLocation>
        <location evidence="2">Cytoplasm</location>
        <location evidence="2">Cytoskeleton</location>
        <location evidence="2">Cilium axoneme</location>
    </subcellularLocation>
</comment>
<comment type="disruption phenotype">
    <text evidence="5">Defects are the cause of a phenotype related to primary ciliary dyskinesia (PCD). Embryos display heart-looping defects at 36 hours post-fertilization and bilateral or lack of spaw expression at the left lateral plate mesoderm in 14 somite embryos, consistent with compromised fluid flow at the Kupffer's vesicle due to impaired ciliary motility.</text>
</comment>
<comment type="similarity">
    <text evidence="6">Belongs to the CCDC39 family.</text>
</comment>
<reference key="1">
    <citation type="journal article" date="2013" name="Nature">
        <title>The zebrafish reference genome sequence and its relationship to the human genome.</title>
        <authorList>
            <person name="Howe K."/>
            <person name="Clark M.D."/>
            <person name="Torroja C.F."/>
            <person name="Torrance J."/>
            <person name="Berthelot C."/>
            <person name="Muffato M."/>
            <person name="Collins J.E."/>
            <person name="Humphray S."/>
            <person name="McLaren K."/>
            <person name="Matthews L."/>
            <person name="McLaren S."/>
            <person name="Sealy I."/>
            <person name="Caccamo M."/>
            <person name="Churcher C."/>
            <person name="Scott C."/>
            <person name="Barrett J.C."/>
            <person name="Koch R."/>
            <person name="Rauch G.J."/>
            <person name="White S."/>
            <person name="Chow W."/>
            <person name="Kilian B."/>
            <person name="Quintais L.T."/>
            <person name="Guerra-Assuncao J.A."/>
            <person name="Zhou Y."/>
            <person name="Gu Y."/>
            <person name="Yen J."/>
            <person name="Vogel J.H."/>
            <person name="Eyre T."/>
            <person name="Redmond S."/>
            <person name="Banerjee R."/>
            <person name="Chi J."/>
            <person name="Fu B."/>
            <person name="Langley E."/>
            <person name="Maguire S.F."/>
            <person name="Laird G.K."/>
            <person name="Lloyd D."/>
            <person name="Kenyon E."/>
            <person name="Donaldson S."/>
            <person name="Sehra H."/>
            <person name="Almeida-King J."/>
            <person name="Loveland J."/>
            <person name="Trevanion S."/>
            <person name="Jones M."/>
            <person name="Quail M."/>
            <person name="Willey D."/>
            <person name="Hunt A."/>
            <person name="Burton J."/>
            <person name="Sims S."/>
            <person name="McLay K."/>
            <person name="Plumb B."/>
            <person name="Davis J."/>
            <person name="Clee C."/>
            <person name="Oliver K."/>
            <person name="Clark R."/>
            <person name="Riddle C."/>
            <person name="Elliot D."/>
            <person name="Threadgold G."/>
            <person name="Harden G."/>
            <person name="Ware D."/>
            <person name="Begum S."/>
            <person name="Mortimore B."/>
            <person name="Kerry G."/>
            <person name="Heath P."/>
            <person name="Phillimore B."/>
            <person name="Tracey A."/>
            <person name="Corby N."/>
            <person name="Dunn M."/>
            <person name="Johnson C."/>
            <person name="Wood J."/>
            <person name="Clark S."/>
            <person name="Pelan S."/>
            <person name="Griffiths G."/>
            <person name="Smith M."/>
            <person name="Glithero R."/>
            <person name="Howden P."/>
            <person name="Barker N."/>
            <person name="Lloyd C."/>
            <person name="Stevens C."/>
            <person name="Harley J."/>
            <person name="Holt K."/>
            <person name="Panagiotidis G."/>
            <person name="Lovell J."/>
            <person name="Beasley H."/>
            <person name="Henderson C."/>
            <person name="Gordon D."/>
            <person name="Auger K."/>
            <person name="Wright D."/>
            <person name="Collins J."/>
            <person name="Raisen C."/>
            <person name="Dyer L."/>
            <person name="Leung K."/>
            <person name="Robertson L."/>
            <person name="Ambridge K."/>
            <person name="Leongamornlert D."/>
            <person name="McGuire S."/>
            <person name="Gilderthorp R."/>
            <person name="Griffiths C."/>
            <person name="Manthravadi D."/>
            <person name="Nichol S."/>
            <person name="Barker G."/>
            <person name="Whitehead S."/>
            <person name="Kay M."/>
            <person name="Brown J."/>
            <person name="Murnane C."/>
            <person name="Gray E."/>
            <person name="Humphries M."/>
            <person name="Sycamore N."/>
            <person name="Barker D."/>
            <person name="Saunders D."/>
            <person name="Wallis J."/>
            <person name="Babbage A."/>
            <person name="Hammond S."/>
            <person name="Mashreghi-Mohammadi M."/>
            <person name="Barr L."/>
            <person name="Martin S."/>
            <person name="Wray P."/>
            <person name="Ellington A."/>
            <person name="Matthews N."/>
            <person name="Ellwood M."/>
            <person name="Woodmansey R."/>
            <person name="Clark G."/>
            <person name="Cooper J."/>
            <person name="Tromans A."/>
            <person name="Grafham D."/>
            <person name="Skuce C."/>
            <person name="Pandian R."/>
            <person name="Andrews R."/>
            <person name="Harrison E."/>
            <person name="Kimberley A."/>
            <person name="Garnett J."/>
            <person name="Fosker N."/>
            <person name="Hall R."/>
            <person name="Garner P."/>
            <person name="Kelly D."/>
            <person name="Bird C."/>
            <person name="Palmer S."/>
            <person name="Gehring I."/>
            <person name="Berger A."/>
            <person name="Dooley C.M."/>
            <person name="Ersan-Urun Z."/>
            <person name="Eser C."/>
            <person name="Geiger H."/>
            <person name="Geisler M."/>
            <person name="Karotki L."/>
            <person name="Kirn A."/>
            <person name="Konantz J."/>
            <person name="Konantz M."/>
            <person name="Oberlander M."/>
            <person name="Rudolph-Geiger S."/>
            <person name="Teucke M."/>
            <person name="Lanz C."/>
            <person name="Raddatz G."/>
            <person name="Osoegawa K."/>
            <person name="Zhu B."/>
            <person name="Rapp A."/>
            <person name="Widaa S."/>
            <person name="Langford C."/>
            <person name="Yang F."/>
            <person name="Schuster S.C."/>
            <person name="Carter N.P."/>
            <person name="Harrow J."/>
            <person name="Ning Z."/>
            <person name="Herrero J."/>
            <person name="Searle S.M."/>
            <person name="Enright A."/>
            <person name="Geisler R."/>
            <person name="Plasterk R.H."/>
            <person name="Lee C."/>
            <person name="Westerfield M."/>
            <person name="de Jong P.J."/>
            <person name="Zon L.I."/>
            <person name="Postlethwait J.H."/>
            <person name="Nusslein-Volhard C."/>
            <person name="Hubbard T.J."/>
            <person name="Roest Crollius H."/>
            <person name="Rogers J."/>
            <person name="Stemple D.L."/>
        </authorList>
    </citation>
    <scope>NUCLEOTIDE SEQUENCE [LARGE SCALE GENOMIC DNA]</scope>
    <source>
        <strain>Tuebingen</strain>
    </source>
</reference>
<reference key="2">
    <citation type="journal article" date="2011" name="Nat. Genet.">
        <title>CCDC39 is required for assembly of inner dynein arms and the dynein regulatory complex and for normal ciliary motility in humans and dogs.</title>
        <authorList>
            <person name="Merveille A.C."/>
            <person name="Davis E.E."/>
            <person name="Becker-Heck A."/>
            <person name="Legendre M."/>
            <person name="Amirav I."/>
            <person name="Bataille G."/>
            <person name="Belmont J."/>
            <person name="Beydon N."/>
            <person name="Billen F."/>
            <person name="Clement A."/>
            <person name="Clercx C."/>
            <person name="Coste A."/>
            <person name="Crosbie R."/>
            <person name="de Blic J."/>
            <person name="Deleuze S."/>
            <person name="Duquesnoy P."/>
            <person name="Escalier D."/>
            <person name="Escudier E."/>
            <person name="Fliegauf M."/>
            <person name="Horvath J."/>
            <person name="Hill K."/>
            <person name="Jorissen M."/>
            <person name="Just J."/>
            <person name="Kispert A."/>
            <person name="Lathrop M."/>
            <person name="Loges N.T."/>
            <person name="Marthin J.K."/>
            <person name="Momozawa Y."/>
            <person name="Montantin G."/>
            <person name="Nielsen K.G."/>
            <person name="Olbrich H."/>
            <person name="Papon J.F."/>
            <person name="Rayet I."/>
            <person name="Roger G."/>
            <person name="Schmidts M."/>
            <person name="Tenreiro H."/>
            <person name="Towbin J.A."/>
            <person name="Zelenika D."/>
            <person name="Zentgraf H."/>
            <person name="Georges M."/>
            <person name="Lequarre A.S."/>
            <person name="Katsanis N."/>
            <person name="Omran H."/>
            <person name="Amselem S."/>
        </authorList>
    </citation>
    <scope>DISRUPTION PHENOTYPE</scope>
</reference>
<name>CCD39_DANRE</name>
<proteinExistence type="inferred from homology"/>
<keyword id="KW-0966">Cell projection</keyword>
<keyword id="KW-1186">Ciliopathy</keyword>
<keyword id="KW-0969">Cilium</keyword>
<keyword id="KW-0175">Coiled coil</keyword>
<keyword id="KW-0963">Cytoplasm</keyword>
<keyword id="KW-0206">Cytoskeleton</keyword>
<keyword id="KW-0990">Primary ciliary dyskinesia</keyword>
<keyword id="KW-1185">Reference proteome</keyword>
<dbReference type="EMBL" id="CABZ01021592">
    <property type="status" value="NOT_ANNOTATED_CDS"/>
    <property type="molecule type" value="Genomic_DNA"/>
</dbReference>
<dbReference type="EMBL" id="CABZ01055305">
    <property type="status" value="NOT_ANNOTATED_CDS"/>
    <property type="molecule type" value="Genomic_DNA"/>
</dbReference>
<dbReference type="EMBL" id="CABZ01055306">
    <property type="status" value="NOT_ANNOTATED_CDS"/>
    <property type="molecule type" value="Genomic_DNA"/>
</dbReference>
<dbReference type="EMBL" id="CABZ01055307">
    <property type="status" value="NOT_ANNOTATED_CDS"/>
    <property type="molecule type" value="Genomic_DNA"/>
</dbReference>
<dbReference type="EMBL" id="CABZ01055310">
    <property type="status" value="NOT_ANNOTATED_CDS"/>
    <property type="molecule type" value="Genomic_DNA"/>
</dbReference>
<dbReference type="EMBL" id="CABZ01068420">
    <property type="status" value="NOT_ANNOTATED_CDS"/>
    <property type="molecule type" value="Genomic_DNA"/>
</dbReference>
<dbReference type="EMBL" id="CABZ01068421">
    <property type="status" value="NOT_ANNOTATED_CDS"/>
    <property type="molecule type" value="Genomic_DNA"/>
</dbReference>
<dbReference type="EMBL" id="CABZ01080220">
    <property type="status" value="NOT_ANNOTATED_CDS"/>
    <property type="molecule type" value="Genomic_DNA"/>
</dbReference>
<dbReference type="RefSeq" id="XP_017206828.1">
    <property type="nucleotide sequence ID" value="XM_017351339.1"/>
</dbReference>
<dbReference type="SMR" id="P0CK98"/>
<dbReference type="FunCoup" id="P0CK98">
    <property type="interactions" value="125"/>
</dbReference>
<dbReference type="STRING" id="7955.ENSDARP00000141240"/>
<dbReference type="PaxDb" id="7955-ENSDARP00000022810"/>
<dbReference type="AGR" id="ZFIN:ZDB-GENE-110603-1"/>
<dbReference type="ZFIN" id="ZDB-GENE-110603-1">
    <property type="gene designation" value="ccdc39"/>
</dbReference>
<dbReference type="eggNOG" id="ENOG502QS0D">
    <property type="taxonomic scope" value="Eukaryota"/>
</dbReference>
<dbReference type="InParanoid" id="P0CK98"/>
<dbReference type="PhylomeDB" id="P0CK98"/>
<dbReference type="TreeFam" id="TF329312"/>
<dbReference type="PRO" id="PR:P0CK98"/>
<dbReference type="Proteomes" id="UP000000437">
    <property type="component" value="Unplaced"/>
</dbReference>
<dbReference type="GO" id="GO:0005930">
    <property type="term" value="C:axoneme"/>
    <property type="evidence" value="ECO:0000250"/>
    <property type="project" value="UniProtKB"/>
</dbReference>
<dbReference type="GO" id="GO:0005576">
    <property type="term" value="C:extracellular region"/>
    <property type="evidence" value="ECO:0007669"/>
    <property type="project" value="GOC"/>
</dbReference>
<dbReference type="GO" id="GO:0070286">
    <property type="term" value="P:axonemal dynein complex assembly"/>
    <property type="evidence" value="ECO:0000250"/>
    <property type="project" value="UniProtKB"/>
</dbReference>
<dbReference type="GO" id="GO:0060285">
    <property type="term" value="P:cilium-dependent cell motility"/>
    <property type="evidence" value="ECO:0000315"/>
    <property type="project" value="UniProtKB"/>
</dbReference>
<dbReference type="GO" id="GO:0007368">
    <property type="term" value="P:determination of left/right symmetry"/>
    <property type="evidence" value="ECO:0000315"/>
    <property type="project" value="ZFIN"/>
</dbReference>
<dbReference type="GO" id="GO:0060287">
    <property type="term" value="P:epithelial cilium movement involved in determination of left/right asymmetry"/>
    <property type="evidence" value="ECO:0000315"/>
    <property type="project" value="UniProtKB"/>
</dbReference>
<dbReference type="GO" id="GO:0036159">
    <property type="term" value="P:inner dynein arm assembly"/>
    <property type="evidence" value="ECO:0000318"/>
    <property type="project" value="GO_Central"/>
</dbReference>
<dbReference type="InterPro" id="IPR033290">
    <property type="entry name" value="CCDC39"/>
</dbReference>
<dbReference type="PANTHER" id="PTHR18962">
    <property type="entry name" value="COILED-COIL DOMAIN-CONTAINING PROTEIN 39"/>
    <property type="match status" value="1"/>
</dbReference>
<dbReference type="PANTHER" id="PTHR18962:SF0">
    <property type="entry name" value="COILED-COIL DOMAIN-CONTAINING PROTEIN 39"/>
    <property type="match status" value="1"/>
</dbReference>
<dbReference type="Pfam" id="PF24161">
    <property type="entry name" value="CCDC39"/>
    <property type="match status" value="1"/>
</dbReference>